<keyword id="KW-0106">Calcium</keyword>
<keyword id="KW-1015">Disulfide bond</keyword>
<keyword id="KW-0378">Hydrolase</keyword>
<keyword id="KW-0442">Lipid degradation</keyword>
<keyword id="KW-0443">Lipid metabolism</keyword>
<keyword id="KW-0479">Metal-binding</keyword>
<keyword id="KW-0964">Secreted</keyword>
<keyword id="KW-0732">Signal</keyword>
<dbReference type="EC" id="3.1.1.4"/>
<dbReference type="EMBL" id="X77755">
    <property type="protein sequence ID" value="CAA54802.1"/>
    <property type="molecule type" value="mRNA"/>
</dbReference>
<dbReference type="SMR" id="Q91133"/>
<dbReference type="GO" id="GO:0005576">
    <property type="term" value="C:extracellular region"/>
    <property type="evidence" value="ECO:0007669"/>
    <property type="project" value="UniProtKB-SubCell"/>
</dbReference>
<dbReference type="GO" id="GO:0005509">
    <property type="term" value="F:calcium ion binding"/>
    <property type="evidence" value="ECO:0007669"/>
    <property type="project" value="InterPro"/>
</dbReference>
<dbReference type="GO" id="GO:0047498">
    <property type="term" value="F:calcium-dependent phospholipase A2 activity"/>
    <property type="evidence" value="ECO:0007669"/>
    <property type="project" value="TreeGrafter"/>
</dbReference>
<dbReference type="GO" id="GO:0005543">
    <property type="term" value="F:phospholipid binding"/>
    <property type="evidence" value="ECO:0007669"/>
    <property type="project" value="TreeGrafter"/>
</dbReference>
<dbReference type="GO" id="GO:0005102">
    <property type="term" value="F:signaling receptor binding"/>
    <property type="evidence" value="ECO:0007669"/>
    <property type="project" value="TreeGrafter"/>
</dbReference>
<dbReference type="GO" id="GO:0050482">
    <property type="term" value="P:arachidonate secretion"/>
    <property type="evidence" value="ECO:0007669"/>
    <property type="project" value="InterPro"/>
</dbReference>
<dbReference type="GO" id="GO:0006633">
    <property type="term" value="P:fatty acid biosynthetic process"/>
    <property type="evidence" value="ECO:0007669"/>
    <property type="project" value="TreeGrafter"/>
</dbReference>
<dbReference type="GO" id="GO:0016042">
    <property type="term" value="P:lipid catabolic process"/>
    <property type="evidence" value="ECO:0007669"/>
    <property type="project" value="UniProtKB-KW"/>
</dbReference>
<dbReference type="GO" id="GO:0006644">
    <property type="term" value="P:phospholipid metabolic process"/>
    <property type="evidence" value="ECO:0007669"/>
    <property type="project" value="InterPro"/>
</dbReference>
<dbReference type="GO" id="GO:0048146">
    <property type="term" value="P:positive regulation of fibroblast proliferation"/>
    <property type="evidence" value="ECO:0007669"/>
    <property type="project" value="TreeGrafter"/>
</dbReference>
<dbReference type="CDD" id="cd00125">
    <property type="entry name" value="PLA2c"/>
    <property type="match status" value="1"/>
</dbReference>
<dbReference type="FunFam" id="1.20.90.10:FF:000007">
    <property type="entry name" value="Acidic phospholipase A2"/>
    <property type="match status" value="1"/>
</dbReference>
<dbReference type="Gene3D" id="1.20.90.10">
    <property type="entry name" value="Phospholipase A2 domain"/>
    <property type="match status" value="1"/>
</dbReference>
<dbReference type="InterPro" id="IPR001211">
    <property type="entry name" value="PLipase_A2"/>
</dbReference>
<dbReference type="InterPro" id="IPR033112">
    <property type="entry name" value="PLipase_A2_Asp_AS"/>
</dbReference>
<dbReference type="InterPro" id="IPR016090">
    <property type="entry name" value="PLipase_A2_dom"/>
</dbReference>
<dbReference type="InterPro" id="IPR036444">
    <property type="entry name" value="PLipase_A2_dom_sf"/>
</dbReference>
<dbReference type="InterPro" id="IPR033113">
    <property type="entry name" value="PLipase_A2_His_AS"/>
</dbReference>
<dbReference type="PANTHER" id="PTHR11716:SF94">
    <property type="entry name" value="PHOSPHOLIPASE A2"/>
    <property type="match status" value="1"/>
</dbReference>
<dbReference type="PANTHER" id="PTHR11716">
    <property type="entry name" value="PHOSPHOLIPASE A2 FAMILY MEMBER"/>
    <property type="match status" value="1"/>
</dbReference>
<dbReference type="Pfam" id="PF00068">
    <property type="entry name" value="Phospholip_A2_1"/>
    <property type="match status" value="1"/>
</dbReference>
<dbReference type="PRINTS" id="PR00389">
    <property type="entry name" value="PHPHLIPASEA2"/>
</dbReference>
<dbReference type="SMART" id="SM00085">
    <property type="entry name" value="PA2c"/>
    <property type="match status" value="1"/>
</dbReference>
<dbReference type="SUPFAM" id="SSF48619">
    <property type="entry name" value="Phospholipase A2, PLA2"/>
    <property type="match status" value="1"/>
</dbReference>
<dbReference type="PROSITE" id="PS00119">
    <property type="entry name" value="PA2_ASP"/>
    <property type="match status" value="1"/>
</dbReference>
<dbReference type="PROSITE" id="PS00118">
    <property type="entry name" value="PA2_HIS"/>
    <property type="match status" value="1"/>
</dbReference>
<name>PA2A2_NAJAT</name>
<comment type="function">
    <text evidence="1">PLA2 catalyzes the calcium-dependent hydrolysis of the 2-acyl groups in 3-sn-phosphoglycerides.</text>
</comment>
<comment type="catalytic activity">
    <reaction evidence="3 4">
        <text>a 1,2-diacyl-sn-glycero-3-phosphocholine + H2O = a 1-acyl-sn-glycero-3-phosphocholine + a fatty acid + H(+)</text>
        <dbReference type="Rhea" id="RHEA:15801"/>
        <dbReference type="ChEBI" id="CHEBI:15377"/>
        <dbReference type="ChEBI" id="CHEBI:15378"/>
        <dbReference type="ChEBI" id="CHEBI:28868"/>
        <dbReference type="ChEBI" id="CHEBI:57643"/>
        <dbReference type="ChEBI" id="CHEBI:58168"/>
        <dbReference type="EC" id="3.1.1.4"/>
    </reaction>
</comment>
<comment type="cofactor">
    <cofactor evidence="1">
        <name>Ca(2+)</name>
        <dbReference type="ChEBI" id="CHEBI:29108"/>
    </cofactor>
    <text evidence="1">Binds 1 Ca(2+) ion.</text>
</comment>
<comment type="subcellular location">
    <subcellularLocation>
        <location>Secreted</location>
    </subcellularLocation>
</comment>
<comment type="tissue specificity">
    <text>Expressed by the venom gland.</text>
</comment>
<comment type="similarity">
    <text evidence="5">Belongs to the phospholipase A2 family. Group I subfamily. D49 sub-subfamily.</text>
</comment>
<protein>
    <recommendedName>
        <fullName>Acidic phospholipase A2 2</fullName>
        <shortName>svPLA2</shortName>
        <ecNumber>3.1.1.4</ecNumber>
    </recommendedName>
    <alternativeName>
        <fullName>Phosphatidylcholine 2-acylhydrolase</fullName>
    </alternativeName>
</protein>
<accession>Q91133</accession>
<feature type="signal peptide" evidence="2">
    <location>
        <begin position="1"/>
        <end position="21"/>
    </location>
</feature>
<feature type="propeptide" id="PRO_0000022918" evidence="1">
    <location>
        <begin position="22"/>
        <end position="27"/>
    </location>
</feature>
<feature type="chain" id="PRO_0000022919" description="Acidic phospholipase A2 2">
    <location>
        <begin position="28"/>
        <end position="146"/>
    </location>
</feature>
<feature type="active site" evidence="1">
    <location>
        <position position="74"/>
    </location>
</feature>
<feature type="active site" evidence="1">
    <location>
        <position position="120"/>
    </location>
</feature>
<feature type="binding site" evidence="1">
    <location>
        <position position="54"/>
    </location>
    <ligand>
        <name>Ca(2+)</name>
        <dbReference type="ChEBI" id="CHEBI:29108"/>
    </ligand>
</feature>
<feature type="binding site" evidence="1">
    <location>
        <position position="56"/>
    </location>
    <ligand>
        <name>Ca(2+)</name>
        <dbReference type="ChEBI" id="CHEBI:29108"/>
    </ligand>
</feature>
<feature type="binding site" evidence="1">
    <location>
        <position position="58"/>
    </location>
    <ligand>
        <name>Ca(2+)</name>
        <dbReference type="ChEBI" id="CHEBI:29108"/>
    </ligand>
</feature>
<feature type="binding site" evidence="1">
    <location>
        <position position="75"/>
    </location>
    <ligand>
        <name>Ca(2+)</name>
        <dbReference type="ChEBI" id="CHEBI:29108"/>
    </ligand>
</feature>
<feature type="disulfide bond" evidence="1">
    <location>
        <begin position="38"/>
        <end position="98"/>
    </location>
</feature>
<feature type="disulfide bond" evidence="1">
    <location>
        <begin position="53"/>
        <end position="145"/>
    </location>
</feature>
<feature type="disulfide bond" evidence="1">
    <location>
        <begin position="55"/>
        <end position="71"/>
    </location>
</feature>
<feature type="disulfide bond" evidence="1">
    <location>
        <begin position="70"/>
        <end position="126"/>
    </location>
</feature>
<feature type="disulfide bond" evidence="1">
    <location>
        <begin position="77"/>
        <end position="119"/>
    </location>
</feature>
<feature type="disulfide bond" evidence="1">
    <location>
        <begin position="87"/>
        <end position="112"/>
    </location>
</feature>
<feature type="disulfide bond" evidence="1">
    <location>
        <begin position="105"/>
        <end position="117"/>
    </location>
</feature>
<proteinExistence type="evidence at transcript level"/>
<evidence type="ECO:0000250" key="1"/>
<evidence type="ECO:0000255" key="2"/>
<evidence type="ECO:0000255" key="3">
    <source>
        <dbReference type="PROSITE-ProRule" id="PRU10035"/>
    </source>
</evidence>
<evidence type="ECO:0000255" key="4">
    <source>
        <dbReference type="PROSITE-ProRule" id="PRU10036"/>
    </source>
</evidence>
<evidence type="ECO:0000305" key="5"/>
<reference key="1">
    <citation type="journal article" date="1994" name="Biochem. Mol. Biol. Int.">
        <title>cDNA and protein sequences coding for the precursor of phospholipase A2 from Taiwan cobra, Naja naja atra.</title>
        <authorList>
            <person name="Pan F.M."/>
            <person name="Chang W.C."/>
            <person name="Hung C.C."/>
            <person name="Chiou S.H."/>
        </authorList>
    </citation>
    <scope>NUCLEOTIDE SEQUENCE [MRNA]</scope>
    <source>
        <tissue>Venom gland</tissue>
    </source>
</reference>
<sequence length="146" mass="15949">MTPAHLLILAAVCVSPLGASSSRPMPLNLYQFKNMIQCTVPSRSWWDFADYGCYCGRGGSGTPVDDLDRCCQVHDHCYNEAEKISGCWPYSKTYSYECSQGTLTCKGGNNACAAAVCDCDRLAAICFAGAPYNNNNYNIDLKARCQ</sequence>
<organism>
    <name type="scientific">Naja atra</name>
    <name type="common">Chinese cobra</name>
    <dbReference type="NCBI Taxonomy" id="8656"/>
    <lineage>
        <taxon>Eukaryota</taxon>
        <taxon>Metazoa</taxon>
        <taxon>Chordata</taxon>
        <taxon>Craniata</taxon>
        <taxon>Vertebrata</taxon>
        <taxon>Euteleostomi</taxon>
        <taxon>Lepidosauria</taxon>
        <taxon>Squamata</taxon>
        <taxon>Bifurcata</taxon>
        <taxon>Unidentata</taxon>
        <taxon>Episquamata</taxon>
        <taxon>Toxicofera</taxon>
        <taxon>Serpentes</taxon>
        <taxon>Colubroidea</taxon>
        <taxon>Elapidae</taxon>
        <taxon>Elapinae</taxon>
        <taxon>Naja</taxon>
    </lineage>
</organism>